<dbReference type="EMBL" id="U30821">
    <property type="protein sequence ID" value="AAA81199.1"/>
    <property type="molecule type" value="Genomic_DNA"/>
</dbReference>
<dbReference type="PIR" id="T06856">
    <property type="entry name" value="T06856"/>
</dbReference>
<dbReference type="RefSeq" id="NP_043168.1">
    <property type="nucleotide sequence ID" value="NC_001675.1"/>
</dbReference>
<dbReference type="GeneID" id="801565"/>
<dbReference type="GO" id="GO:0043190">
    <property type="term" value="C:ATP-binding cassette (ABC) transporter complex"/>
    <property type="evidence" value="ECO:0007669"/>
    <property type="project" value="InterPro"/>
</dbReference>
<dbReference type="GO" id="GO:0033113">
    <property type="term" value="C:cyanelle membrane"/>
    <property type="evidence" value="ECO:0007669"/>
    <property type="project" value="UniProtKB-SubCell"/>
</dbReference>
<dbReference type="GO" id="GO:0140359">
    <property type="term" value="F:ABC-type transporter activity"/>
    <property type="evidence" value="ECO:0007669"/>
    <property type="project" value="InterPro"/>
</dbReference>
<dbReference type="InterPro" id="IPR013525">
    <property type="entry name" value="ABC2_TM"/>
</dbReference>
<dbReference type="InterPro" id="IPR047817">
    <property type="entry name" value="ABC2_TM_bact-type"/>
</dbReference>
<dbReference type="InterPro" id="IPR000412">
    <property type="entry name" value="ABC_2_transport"/>
</dbReference>
<dbReference type="InterPro" id="IPR051784">
    <property type="entry name" value="Nod_factor_ABC_transporter"/>
</dbReference>
<dbReference type="PANTHER" id="PTHR43229">
    <property type="entry name" value="NODULATION PROTEIN J"/>
    <property type="match status" value="1"/>
</dbReference>
<dbReference type="PANTHER" id="PTHR43229:SF2">
    <property type="entry name" value="NODULATION PROTEIN J"/>
    <property type="match status" value="1"/>
</dbReference>
<dbReference type="Pfam" id="PF01061">
    <property type="entry name" value="ABC2_membrane"/>
    <property type="match status" value="1"/>
</dbReference>
<dbReference type="PIRSF" id="PIRSF006648">
    <property type="entry name" value="DrrB"/>
    <property type="match status" value="1"/>
</dbReference>
<dbReference type="PROSITE" id="PS51012">
    <property type="entry name" value="ABC_TM2"/>
    <property type="match status" value="1"/>
</dbReference>
<protein>
    <recommendedName>
        <fullName>Putative transport permease ycf38</fullName>
    </recommendedName>
</protein>
<sequence>MNFKLKNLRLSRLNQEKSSSVTSFFFIQELFVLVKRLFIQLKRRPITLISGILQPLLWLILFGALFQKAPFRISNLENNYLQFFYPGILVFTAFAGSLNSSLPLIFDREFGFLNRLLVAPLNSRFSILFSSAFFISVLSFIQVFFIMLFGVFLGIQLPPFKSLIVSFFFLFLLIIGITTFSILLALLLPTHIELIAVIFVLNLPLLFSSTALAPLDFMPSWLQIISCLNPLTYTIEPIRFLYSHSSWLFSSSLFELSFFSINIGQSLIILIIFDLVGFLLFKKILKSIFI</sequence>
<reference key="1">
    <citation type="journal article" date="1995" name="Plant Mol. Biol. Rep.">
        <title>Nucleotide sequence of the cyanelle DNA from Cyanophora paradoxa.</title>
        <authorList>
            <person name="Stirewalt V.L."/>
            <person name="Michalowski C.B."/>
            <person name="Loeffelhardt W."/>
            <person name="Bohnert H.J."/>
            <person name="Bryant D.A."/>
        </authorList>
    </citation>
    <scope>NUCLEOTIDE SEQUENCE [LARGE SCALE GENOMIC DNA]</scope>
    <source>
        <strain>UTEX LB 555 / Pringsheim</strain>
    </source>
</reference>
<reference key="2">
    <citation type="book" date="1997" name="Eukaryotism and symbiosis">
        <title>The complete sequence of the cyanelle genome of Cyanophora paradoxa: the genetic complexity of a primitive plastid.</title>
        <editorList>
            <person name="Schenk H.E.A."/>
            <person name="Herrmann R."/>
            <person name="Jeon K.W."/>
            <person name="Mueller N.E."/>
            <person name="Schwemmler W."/>
        </editorList>
        <authorList>
            <person name="Loeffelhardt W."/>
            <person name="Stirewalt V.L."/>
            <person name="Michalowski C.B."/>
            <person name="Annarella M."/>
            <person name="Farley J.Y."/>
            <person name="Schluchter W.M."/>
            <person name="Chung S."/>
            <person name="Newmann-Spallart C."/>
            <person name="Steiner J.M."/>
            <person name="Jakowitsch J."/>
            <person name="Bohnert H.J."/>
            <person name="Bryant D.A."/>
        </authorList>
    </citation>
    <scope>NUCLEOTIDE SEQUENCE [LARGE SCALE GENOMIC DNA]</scope>
    <source>
        <strain>UTEX LB 555 / Pringsheim</strain>
    </source>
</reference>
<name>YCF38_CYAPA</name>
<geneLocation type="cyanelle"/>
<comment type="subcellular location">
    <subcellularLocation>
        <location evidence="1">Plastid</location>
        <location evidence="1">Cyanelle membrane</location>
        <topology evidence="1">Multi-pass membrane protein</topology>
    </subcellularLocation>
</comment>
<comment type="similarity">
    <text evidence="4">Belongs to the ABC-2 integral membrane protein family.</text>
</comment>
<accession>P48278</accession>
<keyword id="KW-0194">Cyanelle</keyword>
<keyword id="KW-0472">Membrane</keyword>
<keyword id="KW-0934">Plastid</keyword>
<keyword id="KW-0812">Transmembrane</keyword>
<keyword id="KW-1133">Transmembrane helix</keyword>
<keyword id="KW-0813">Transport</keyword>
<gene>
    <name type="primary">ycf38</name>
</gene>
<feature type="chain" id="PRO_0000183010" description="Putative transport permease ycf38">
    <location>
        <begin position="1"/>
        <end position="290"/>
    </location>
</feature>
<feature type="transmembrane region" description="Helical" evidence="2">
    <location>
        <begin position="21"/>
        <end position="41"/>
    </location>
</feature>
<feature type="transmembrane region" description="Helical" evidence="2">
    <location>
        <begin position="46"/>
        <end position="66"/>
    </location>
</feature>
<feature type="transmembrane region" description="Helical" evidence="2">
    <location>
        <begin position="86"/>
        <end position="106"/>
    </location>
</feature>
<feature type="transmembrane region" description="Helical" evidence="2">
    <location>
        <begin position="133"/>
        <end position="153"/>
    </location>
</feature>
<feature type="transmembrane region" description="Helical" evidence="2">
    <location>
        <begin position="167"/>
        <end position="187"/>
    </location>
</feature>
<feature type="transmembrane region" description="Helical" evidence="2">
    <location>
        <begin position="194"/>
        <end position="213"/>
    </location>
</feature>
<feature type="transmembrane region" description="Helical" evidence="2">
    <location>
        <begin position="261"/>
        <end position="281"/>
    </location>
</feature>
<feature type="domain" description="ABC transmembrane type-2" evidence="3">
    <location>
        <begin position="46"/>
        <end position="284"/>
    </location>
</feature>
<organism>
    <name type="scientific">Cyanophora paradoxa</name>
    <dbReference type="NCBI Taxonomy" id="2762"/>
    <lineage>
        <taxon>Eukaryota</taxon>
        <taxon>Glaucocystophyceae</taxon>
        <taxon>Cyanophoraceae</taxon>
        <taxon>Cyanophora</taxon>
    </lineage>
</organism>
<evidence type="ECO:0000250" key="1"/>
<evidence type="ECO:0000255" key="2"/>
<evidence type="ECO:0000255" key="3">
    <source>
        <dbReference type="PROSITE-ProRule" id="PRU00442"/>
    </source>
</evidence>
<evidence type="ECO:0000305" key="4"/>
<proteinExistence type="inferred from homology"/>